<dbReference type="EC" id="2.1.1.166" evidence="1"/>
<dbReference type="EMBL" id="CP000477">
    <property type="protein sequence ID" value="ABK14925.1"/>
    <property type="molecule type" value="Genomic_DNA"/>
</dbReference>
<dbReference type="RefSeq" id="WP_011696318.1">
    <property type="nucleotide sequence ID" value="NC_008553.1"/>
</dbReference>
<dbReference type="SMR" id="A0B8A1"/>
<dbReference type="STRING" id="349307.Mthe_1143"/>
<dbReference type="GeneID" id="4462893"/>
<dbReference type="KEGG" id="mtp:Mthe_1143"/>
<dbReference type="HOGENOM" id="CLU_009422_4_4_2"/>
<dbReference type="OrthoDB" id="26307at2157"/>
<dbReference type="Proteomes" id="UP000000674">
    <property type="component" value="Chromosome"/>
</dbReference>
<dbReference type="GO" id="GO:0005737">
    <property type="term" value="C:cytoplasm"/>
    <property type="evidence" value="ECO:0007669"/>
    <property type="project" value="UniProtKB-SubCell"/>
</dbReference>
<dbReference type="GO" id="GO:0008650">
    <property type="term" value="F:rRNA (uridine-2'-O-)-methyltransferase activity"/>
    <property type="evidence" value="ECO:0007669"/>
    <property type="project" value="UniProtKB-UniRule"/>
</dbReference>
<dbReference type="Gene3D" id="2.40.50.140">
    <property type="entry name" value="Nucleic acid-binding proteins"/>
    <property type="match status" value="1"/>
</dbReference>
<dbReference type="Gene3D" id="3.40.50.150">
    <property type="entry name" value="Vaccinia Virus protein VP39"/>
    <property type="match status" value="1"/>
</dbReference>
<dbReference type="HAMAP" id="MF_01547">
    <property type="entry name" value="RNA_methyltr_E"/>
    <property type="match status" value="1"/>
</dbReference>
<dbReference type="InterPro" id="IPR012340">
    <property type="entry name" value="NA-bd_OB-fold"/>
</dbReference>
<dbReference type="InterPro" id="IPR050082">
    <property type="entry name" value="RNA_methyltr_RlmE"/>
</dbReference>
<dbReference type="InterPro" id="IPR002877">
    <property type="entry name" value="RNA_MeTrfase_FtsJ_dom"/>
</dbReference>
<dbReference type="InterPro" id="IPR015507">
    <property type="entry name" value="rRNA-MeTfrase_E"/>
</dbReference>
<dbReference type="InterPro" id="IPR029063">
    <property type="entry name" value="SAM-dependent_MTases_sf"/>
</dbReference>
<dbReference type="InterPro" id="IPR002792">
    <property type="entry name" value="TRAM_dom"/>
</dbReference>
<dbReference type="PANTHER" id="PTHR10920:SF13">
    <property type="entry name" value="PRE-RRNA 2'-O-RIBOSE RNA METHYLTRANSFERASE FTSJ3"/>
    <property type="match status" value="1"/>
</dbReference>
<dbReference type="PANTHER" id="PTHR10920">
    <property type="entry name" value="RIBOSOMAL RNA METHYLTRANSFERASE"/>
    <property type="match status" value="1"/>
</dbReference>
<dbReference type="Pfam" id="PF01728">
    <property type="entry name" value="FtsJ"/>
    <property type="match status" value="1"/>
</dbReference>
<dbReference type="Pfam" id="PF01938">
    <property type="entry name" value="TRAM"/>
    <property type="match status" value="1"/>
</dbReference>
<dbReference type="SUPFAM" id="SSF50249">
    <property type="entry name" value="Nucleic acid-binding proteins"/>
    <property type="match status" value="1"/>
</dbReference>
<dbReference type="SUPFAM" id="SSF53335">
    <property type="entry name" value="S-adenosyl-L-methionine-dependent methyltransferases"/>
    <property type="match status" value="1"/>
</dbReference>
<dbReference type="PROSITE" id="PS50926">
    <property type="entry name" value="TRAM"/>
    <property type="match status" value="1"/>
</dbReference>
<feature type="chain" id="PRO_0000282819" description="Ribosomal RNA large subunit methyltransferase E">
    <location>
        <begin position="1"/>
        <end position="255"/>
    </location>
</feature>
<feature type="domain" description="TRAM" evidence="1">
    <location>
        <begin position="195"/>
        <end position="253"/>
    </location>
</feature>
<feature type="active site" description="Proton acceptor" evidence="1">
    <location>
        <position position="148"/>
    </location>
</feature>
<feature type="binding site" evidence="1">
    <location>
        <position position="50"/>
    </location>
    <ligand>
        <name>S-adenosyl-L-methionine</name>
        <dbReference type="ChEBI" id="CHEBI:59789"/>
    </ligand>
</feature>
<feature type="binding site" evidence="1">
    <location>
        <position position="52"/>
    </location>
    <ligand>
        <name>S-adenosyl-L-methionine</name>
        <dbReference type="ChEBI" id="CHEBI:59789"/>
    </ligand>
</feature>
<feature type="binding site" evidence="1">
    <location>
        <position position="68"/>
    </location>
    <ligand>
        <name>S-adenosyl-L-methionine</name>
        <dbReference type="ChEBI" id="CHEBI:59789"/>
    </ligand>
</feature>
<feature type="binding site" evidence="1">
    <location>
        <position position="84"/>
    </location>
    <ligand>
        <name>S-adenosyl-L-methionine</name>
        <dbReference type="ChEBI" id="CHEBI:59789"/>
    </ligand>
</feature>
<feature type="binding site" evidence="1">
    <location>
        <position position="108"/>
    </location>
    <ligand>
        <name>S-adenosyl-L-methionine</name>
        <dbReference type="ChEBI" id="CHEBI:59789"/>
    </ligand>
</feature>
<protein>
    <recommendedName>
        <fullName evidence="1">Ribosomal RNA large subunit methyltransferase E</fullName>
        <ecNumber evidence="1">2.1.1.166</ecNumber>
    </recommendedName>
    <alternativeName>
        <fullName evidence="1">23S rRNA Um2552 methyltransferase</fullName>
    </alternativeName>
    <alternativeName>
        <fullName evidence="1">rRNA (uridine-2'-O-)-methyltransferase</fullName>
    </alternativeName>
</protein>
<evidence type="ECO:0000255" key="1">
    <source>
        <dbReference type="HAMAP-Rule" id="MF_01547"/>
    </source>
</evidence>
<accession>A0B8A1</accession>
<keyword id="KW-0963">Cytoplasm</keyword>
<keyword id="KW-0489">Methyltransferase</keyword>
<keyword id="KW-1185">Reference proteome</keyword>
<keyword id="KW-0698">rRNA processing</keyword>
<keyword id="KW-0949">S-adenosyl-L-methionine</keyword>
<keyword id="KW-0808">Transferase</keyword>
<reference key="1">
    <citation type="submission" date="2006-10" db="EMBL/GenBank/DDBJ databases">
        <title>Complete sequence of Methanosaeta thermophila PT.</title>
        <authorList>
            <consortium name="US DOE Joint Genome Institute"/>
            <person name="Copeland A."/>
            <person name="Lucas S."/>
            <person name="Lapidus A."/>
            <person name="Barry K."/>
            <person name="Detter J.C."/>
            <person name="Glavina del Rio T."/>
            <person name="Hammon N."/>
            <person name="Israni S."/>
            <person name="Pitluck S."/>
            <person name="Chain P."/>
            <person name="Malfatti S."/>
            <person name="Shin M."/>
            <person name="Vergez L."/>
            <person name="Schmutz J."/>
            <person name="Larimer F."/>
            <person name="Land M."/>
            <person name="Hauser L."/>
            <person name="Kyrpides N."/>
            <person name="Kim E."/>
            <person name="Smith K.S."/>
            <person name="Ingram-Smith C."/>
            <person name="Richardson P."/>
        </authorList>
    </citation>
    <scope>NUCLEOTIDE SEQUENCE [LARGE SCALE GENOMIC DNA]</scope>
    <source>
        <strain>DSM 6194 / JCM 14653 / NBRC 101360 / PT</strain>
    </source>
</reference>
<gene>
    <name evidence="1" type="primary">rlmE</name>
    <name evidence="1" type="synonym">rrmJ</name>
    <name type="ordered locus">Mthe_1143</name>
</gene>
<organism>
    <name type="scientific">Methanothrix thermoacetophila (strain DSM 6194 / JCM 14653 / NBRC 101360 / PT)</name>
    <name type="common">Methanosaeta thermophila</name>
    <dbReference type="NCBI Taxonomy" id="349307"/>
    <lineage>
        <taxon>Archaea</taxon>
        <taxon>Methanobacteriati</taxon>
        <taxon>Methanobacteriota</taxon>
        <taxon>Stenosarchaea group</taxon>
        <taxon>Methanomicrobia</taxon>
        <taxon>Methanotrichales</taxon>
        <taxon>Methanotrichaceae</taxon>
        <taxon>Methanothrix</taxon>
    </lineage>
</organism>
<proteinExistence type="inferred from homology"/>
<sequence length="255" mass="28060">MARDQKDHYYRKAKEEGYRARSAYKLKQINDKFHIIRRGSRVVDLGAAPGGWLQVARELSGGIVVGVDLERIEPLEGIVTIQGDITKEETLEQIAAALGGQADVVISDAAPNLSGIWDVDHARSIDLSRAALRIAKRLLRPGGSFLVKVFQGDMFNDYLEEVKREFSSVHAYTPPASRKESAEIYVIGKKLLSAPVRSGEIYDVTVDSVGRTGDGIAMIQGFAVIVKNASPGERLRIKIGPVKQRFAFASILERL</sequence>
<name>RLME_METTP</name>
<comment type="function">
    <text evidence="1">Specifically methylates the uridine in position 2552 of 23S rRNA at the 2'-O position of the ribose in the fully assembled 50S ribosomal subunit.</text>
</comment>
<comment type="catalytic activity">
    <reaction evidence="1">
        <text>uridine(2552) in 23S rRNA + S-adenosyl-L-methionine = 2'-O-methyluridine(2552) in 23S rRNA + S-adenosyl-L-homocysteine + H(+)</text>
        <dbReference type="Rhea" id="RHEA:42720"/>
        <dbReference type="Rhea" id="RHEA-COMP:10202"/>
        <dbReference type="Rhea" id="RHEA-COMP:10203"/>
        <dbReference type="ChEBI" id="CHEBI:15378"/>
        <dbReference type="ChEBI" id="CHEBI:57856"/>
        <dbReference type="ChEBI" id="CHEBI:59789"/>
        <dbReference type="ChEBI" id="CHEBI:65315"/>
        <dbReference type="ChEBI" id="CHEBI:74478"/>
        <dbReference type="EC" id="2.1.1.166"/>
    </reaction>
</comment>
<comment type="subcellular location">
    <subcellularLocation>
        <location evidence="1">Cytoplasm</location>
    </subcellularLocation>
</comment>
<comment type="similarity">
    <text evidence="1">Belongs to the class I-like SAM-binding methyltransferase superfamily. RNA methyltransferase RlmE family.</text>
</comment>